<dbReference type="EC" id="7.1.2.2" evidence="1"/>
<dbReference type="EMBL" id="CP001025">
    <property type="protein sequence ID" value="ACB62606.1"/>
    <property type="molecule type" value="Genomic_DNA"/>
</dbReference>
<dbReference type="RefSeq" id="WP_011655619.1">
    <property type="nucleotide sequence ID" value="NC_010551.1"/>
</dbReference>
<dbReference type="SMR" id="B1YQL2"/>
<dbReference type="GeneID" id="93084497"/>
<dbReference type="KEGG" id="bac:BamMC406_0104"/>
<dbReference type="HOGENOM" id="CLU_010091_2_1_4"/>
<dbReference type="OrthoDB" id="9803053at2"/>
<dbReference type="Proteomes" id="UP000001680">
    <property type="component" value="Chromosome 1"/>
</dbReference>
<dbReference type="GO" id="GO:0005886">
    <property type="term" value="C:plasma membrane"/>
    <property type="evidence" value="ECO:0007669"/>
    <property type="project" value="UniProtKB-SubCell"/>
</dbReference>
<dbReference type="GO" id="GO:0045259">
    <property type="term" value="C:proton-transporting ATP synthase complex"/>
    <property type="evidence" value="ECO:0007669"/>
    <property type="project" value="UniProtKB-KW"/>
</dbReference>
<dbReference type="GO" id="GO:0043531">
    <property type="term" value="F:ADP binding"/>
    <property type="evidence" value="ECO:0007669"/>
    <property type="project" value="TreeGrafter"/>
</dbReference>
<dbReference type="GO" id="GO:0005524">
    <property type="term" value="F:ATP binding"/>
    <property type="evidence" value="ECO:0007669"/>
    <property type="project" value="UniProtKB-UniRule"/>
</dbReference>
<dbReference type="GO" id="GO:0046933">
    <property type="term" value="F:proton-transporting ATP synthase activity, rotational mechanism"/>
    <property type="evidence" value="ECO:0007669"/>
    <property type="project" value="UniProtKB-UniRule"/>
</dbReference>
<dbReference type="CDD" id="cd18113">
    <property type="entry name" value="ATP-synt_F1_alpha_C"/>
    <property type="match status" value="1"/>
</dbReference>
<dbReference type="CDD" id="cd18116">
    <property type="entry name" value="ATP-synt_F1_alpha_N"/>
    <property type="match status" value="1"/>
</dbReference>
<dbReference type="CDD" id="cd01132">
    <property type="entry name" value="F1-ATPase_alpha_CD"/>
    <property type="match status" value="1"/>
</dbReference>
<dbReference type="FunFam" id="1.20.150.20:FF:000001">
    <property type="entry name" value="ATP synthase subunit alpha"/>
    <property type="match status" value="1"/>
</dbReference>
<dbReference type="FunFam" id="2.40.30.20:FF:000001">
    <property type="entry name" value="ATP synthase subunit alpha"/>
    <property type="match status" value="1"/>
</dbReference>
<dbReference type="FunFam" id="3.40.50.300:FF:000002">
    <property type="entry name" value="ATP synthase subunit alpha"/>
    <property type="match status" value="1"/>
</dbReference>
<dbReference type="Gene3D" id="2.40.30.20">
    <property type="match status" value="1"/>
</dbReference>
<dbReference type="Gene3D" id="1.20.150.20">
    <property type="entry name" value="ATP synthase alpha/beta chain, C-terminal domain"/>
    <property type="match status" value="1"/>
</dbReference>
<dbReference type="Gene3D" id="3.40.50.300">
    <property type="entry name" value="P-loop containing nucleotide triphosphate hydrolases"/>
    <property type="match status" value="1"/>
</dbReference>
<dbReference type="HAMAP" id="MF_01346">
    <property type="entry name" value="ATP_synth_alpha_bact"/>
    <property type="match status" value="1"/>
</dbReference>
<dbReference type="InterPro" id="IPR023366">
    <property type="entry name" value="ATP_synth_asu-like_sf"/>
</dbReference>
<dbReference type="InterPro" id="IPR000793">
    <property type="entry name" value="ATP_synth_asu_C"/>
</dbReference>
<dbReference type="InterPro" id="IPR038376">
    <property type="entry name" value="ATP_synth_asu_C_sf"/>
</dbReference>
<dbReference type="InterPro" id="IPR033732">
    <property type="entry name" value="ATP_synth_F1_a_nt-bd_dom"/>
</dbReference>
<dbReference type="InterPro" id="IPR005294">
    <property type="entry name" value="ATP_synth_F1_asu"/>
</dbReference>
<dbReference type="InterPro" id="IPR020003">
    <property type="entry name" value="ATPase_a/bsu_AS"/>
</dbReference>
<dbReference type="InterPro" id="IPR004100">
    <property type="entry name" value="ATPase_F1/V1/A1_a/bsu_N"/>
</dbReference>
<dbReference type="InterPro" id="IPR036121">
    <property type="entry name" value="ATPase_F1/V1/A1_a/bsu_N_sf"/>
</dbReference>
<dbReference type="InterPro" id="IPR000194">
    <property type="entry name" value="ATPase_F1/V1/A1_a/bsu_nucl-bd"/>
</dbReference>
<dbReference type="InterPro" id="IPR027417">
    <property type="entry name" value="P-loop_NTPase"/>
</dbReference>
<dbReference type="NCBIfam" id="TIGR00962">
    <property type="entry name" value="atpA"/>
    <property type="match status" value="1"/>
</dbReference>
<dbReference type="NCBIfam" id="NF009884">
    <property type="entry name" value="PRK13343.1"/>
    <property type="match status" value="1"/>
</dbReference>
<dbReference type="PANTHER" id="PTHR48082">
    <property type="entry name" value="ATP SYNTHASE SUBUNIT ALPHA, MITOCHONDRIAL"/>
    <property type="match status" value="1"/>
</dbReference>
<dbReference type="PANTHER" id="PTHR48082:SF2">
    <property type="entry name" value="ATP SYNTHASE SUBUNIT ALPHA, MITOCHONDRIAL"/>
    <property type="match status" value="1"/>
</dbReference>
<dbReference type="Pfam" id="PF00006">
    <property type="entry name" value="ATP-synt_ab"/>
    <property type="match status" value="1"/>
</dbReference>
<dbReference type="Pfam" id="PF00306">
    <property type="entry name" value="ATP-synt_ab_C"/>
    <property type="match status" value="1"/>
</dbReference>
<dbReference type="Pfam" id="PF02874">
    <property type="entry name" value="ATP-synt_ab_N"/>
    <property type="match status" value="1"/>
</dbReference>
<dbReference type="PIRSF" id="PIRSF039088">
    <property type="entry name" value="F_ATPase_subunit_alpha"/>
    <property type="match status" value="1"/>
</dbReference>
<dbReference type="SUPFAM" id="SSF47917">
    <property type="entry name" value="C-terminal domain of alpha and beta subunits of F1 ATP synthase"/>
    <property type="match status" value="1"/>
</dbReference>
<dbReference type="SUPFAM" id="SSF50615">
    <property type="entry name" value="N-terminal domain of alpha and beta subunits of F1 ATP synthase"/>
    <property type="match status" value="1"/>
</dbReference>
<dbReference type="SUPFAM" id="SSF52540">
    <property type="entry name" value="P-loop containing nucleoside triphosphate hydrolases"/>
    <property type="match status" value="1"/>
</dbReference>
<dbReference type="PROSITE" id="PS00152">
    <property type="entry name" value="ATPASE_ALPHA_BETA"/>
    <property type="match status" value="1"/>
</dbReference>
<sequence length="513" mass="55754">MQLNPSEISELIKSRIQGLEASADVRNQGTVISVTDGIVRIHGLSDVMQGEMLEFPGNTFGLALNLERDSVGAVILGEYEHISEGDVVKTTGRILEVPVGPELVGRVVDALGNPIDGKGPVNAKLTDAIEKIAPGVIWRKSVSQPVQTGIKSIDAMVPIGRGQRELIIGDRQCGKTAVAIDAIINQKGKDLVCIYVAIGQKASSIMNVVRKLEETGAMEYTIVVAASASDSAAMQYLAPYAGCTMGEYFRDRGQDALIIYDDLTKQAWAYRQISLLLRRPPGREAYPGDVFYLHSRLLERAARVSEEYVEKFTNGEVKGKSGSLTALPVIETQAGDVTAFVPTNVISITDGQIFLETDLFNAGIRPAINAGVSVSRVGGAAQTKVVKKLSGGIRTDLAQYRELAAFAQFASDLDEATRKQLERGRRVTELLKQPQYQPLQVWELAVSLYAANNGYLDDLDVKQVLPFEKGLRDNLKTSHADLIKRIEDTKDLSKDDEGALRAAIESFKKSGAY</sequence>
<reference key="1">
    <citation type="submission" date="2008-04" db="EMBL/GenBank/DDBJ databases">
        <title>Complete sequence of chromosome 1 of Burkholderia ambifaria MC40-6.</title>
        <authorList>
            <person name="Copeland A."/>
            <person name="Lucas S."/>
            <person name="Lapidus A."/>
            <person name="Glavina del Rio T."/>
            <person name="Dalin E."/>
            <person name="Tice H."/>
            <person name="Pitluck S."/>
            <person name="Chain P."/>
            <person name="Malfatti S."/>
            <person name="Shin M."/>
            <person name="Vergez L."/>
            <person name="Lang D."/>
            <person name="Schmutz J."/>
            <person name="Larimer F."/>
            <person name="Land M."/>
            <person name="Hauser L."/>
            <person name="Kyrpides N."/>
            <person name="Lykidis A."/>
            <person name="Ramette A."/>
            <person name="Konstantinidis K."/>
            <person name="Tiedje J."/>
            <person name="Richardson P."/>
        </authorList>
    </citation>
    <scope>NUCLEOTIDE SEQUENCE [LARGE SCALE GENOMIC DNA]</scope>
    <source>
        <strain>MC40-6</strain>
    </source>
</reference>
<organism>
    <name type="scientific">Burkholderia ambifaria (strain MC40-6)</name>
    <dbReference type="NCBI Taxonomy" id="398577"/>
    <lineage>
        <taxon>Bacteria</taxon>
        <taxon>Pseudomonadati</taxon>
        <taxon>Pseudomonadota</taxon>
        <taxon>Betaproteobacteria</taxon>
        <taxon>Burkholderiales</taxon>
        <taxon>Burkholderiaceae</taxon>
        <taxon>Burkholderia</taxon>
        <taxon>Burkholderia cepacia complex</taxon>
    </lineage>
</organism>
<gene>
    <name evidence="1" type="primary">atpA</name>
    <name type="ordered locus">BamMC406_0104</name>
</gene>
<keyword id="KW-0066">ATP synthesis</keyword>
<keyword id="KW-0067">ATP-binding</keyword>
<keyword id="KW-0997">Cell inner membrane</keyword>
<keyword id="KW-1003">Cell membrane</keyword>
<keyword id="KW-0139">CF(1)</keyword>
<keyword id="KW-0375">Hydrogen ion transport</keyword>
<keyword id="KW-0406">Ion transport</keyword>
<keyword id="KW-0472">Membrane</keyword>
<keyword id="KW-0547">Nucleotide-binding</keyword>
<keyword id="KW-1278">Translocase</keyword>
<keyword id="KW-0813">Transport</keyword>
<proteinExistence type="inferred from homology"/>
<comment type="function">
    <text evidence="1">Produces ATP from ADP in the presence of a proton gradient across the membrane. The alpha chain is a regulatory subunit.</text>
</comment>
<comment type="catalytic activity">
    <reaction evidence="1">
        <text>ATP + H2O + 4 H(+)(in) = ADP + phosphate + 5 H(+)(out)</text>
        <dbReference type="Rhea" id="RHEA:57720"/>
        <dbReference type="ChEBI" id="CHEBI:15377"/>
        <dbReference type="ChEBI" id="CHEBI:15378"/>
        <dbReference type="ChEBI" id="CHEBI:30616"/>
        <dbReference type="ChEBI" id="CHEBI:43474"/>
        <dbReference type="ChEBI" id="CHEBI:456216"/>
        <dbReference type="EC" id="7.1.2.2"/>
    </reaction>
</comment>
<comment type="subunit">
    <text evidence="1">F-type ATPases have 2 components, CF(1) - the catalytic core - and CF(0) - the membrane proton channel. CF(1) has five subunits: alpha(3), beta(3), gamma(1), delta(1), epsilon(1). CF(0) has three main subunits: a(1), b(2) and c(9-12). The alpha and beta chains form an alternating ring which encloses part of the gamma chain. CF(1) is attached to CF(0) by a central stalk formed by the gamma and epsilon chains, while a peripheral stalk is formed by the delta and b chains.</text>
</comment>
<comment type="subcellular location">
    <subcellularLocation>
        <location evidence="1">Cell inner membrane</location>
        <topology evidence="1">Peripheral membrane protein</topology>
    </subcellularLocation>
</comment>
<comment type="similarity">
    <text evidence="1">Belongs to the ATPase alpha/beta chains family.</text>
</comment>
<evidence type="ECO:0000255" key="1">
    <source>
        <dbReference type="HAMAP-Rule" id="MF_01346"/>
    </source>
</evidence>
<accession>B1YQL2</accession>
<name>ATPA_BURA4</name>
<protein>
    <recommendedName>
        <fullName evidence="1">ATP synthase subunit alpha</fullName>
        <ecNumber evidence="1">7.1.2.2</ecNumber>
    </recommendedName>
    <alternativeName>
        <fullName evidence="1">ATP synthase F1 sector subunit alpha</fullName>
    </alternativeName>
    <alternativeName>
        <fullName evidence="1">F-ATPase subunit alpha</fullName>
    </alternativeName>
</protein>
<feature type="chain" id="PRO_1000143348" description="ATP synthase subunit alpha">
    <location>
        <begin position="1"/>
        <end position="513"/>
    </location>
</feature>
<feature type="binding site" evidence="1">
    <location>
        <begin position="169"/>
        <end position="176"/>
    </location>
    <ligand>
        <name>ATP</name>
        <dbReference type="ChEBI" id="CHEBI:30616"/>
    </ligand>
</feature>
<feature type="site" description="Required for activity" evidence="1">
    <location>
        <position position="373"/>
    </location>
</feature>